<name>TRMA_NEIGO</name>
<sequence length="225" mass="25680">IRCDRFDAASEAVNCLMPELIAVAAQSAELRNHWYAVEFLSTLSGEMLVTMIYHKRLDDEWMKAAQALQQQLDISVIGRSRGQKIVLKQDYVTETLRVGDRDFHYRQIEGSFTQPNAAVCRKMLEWACARRKAWGGDLLELYCGNGNFTLPLSRYFRQVLATEISKTSVSAAQWNIEANWIGNIKIARLSAEEFTEAYTGKREFTRLKESGIVLTDYAFSTIFVD</sequence>
<accession>P55134</accession>
<reference key="1">
    <citation type="journal article" date="1993" name="Plasmid">
        <title>Lack of substantial sequence homology between the cryptic plasmid and chromosome of Neisseria gonorrhoeae.</title>
        <authorList>
            <person name="Sarandopoulos S."/>
            <person name="Davies J.K."/>
        </authorList>
    </citation>
    <scope>NUCLEOTIDE SEQUENCE [GENOMIC DNA]</scope>
</reference>
<evidence type="ECO:0000250" key="1"/>
<evidence type="ECO:0000255" key="2">
    <source>
        <dbReference type="PROSITE-ProRule" id="PRU01024"/>
    </source>
</evidence>
<comment type="function">
    <text evidence="1">Dual-specificity methyltransferase that catalyzes the formation of 5-methyluridine at position 54 (m5U54) in all tRNAs, and that of position 341 (m5U341) in tmRNA (transfer-mRNA).</text>
</comment>
<comment type="catalytic activity">
    <reaction>
        <text>uridine(54) in tRNA + S-adenosyl-L-methionine = 5-methyluridine(54) in tRNA + S-adenosyl-L-homocysteine + H(+)</text>
        <dbReference type="Rhea" id="RHEA:42712"/>
        <dbReference type="Rhea" id="RHEA-COMP:10167"/>
        <dbReference type="Rhea" id="RHEA-COMP:10193"/>
        <dbReference type="ChEBI" id="CHEBI:15378"/>
        <dbReference type="ChEBI" id="CHEBI:57856"/>
        <dbReference type="ChEBI" id="CHEBI:59789"/>
        <dbReference type="ChEBI" id="CHEBI:65315"/>
        <dbReference type="ChEBI" id="CHEBI:74447"/>
        <dbReference type="EC" id="2.1.1.35"/>
    </reaction>
</comment>
<comment type="catalytic activity">
    <reaction>
        <text>uridine(341) in tmRNA + S-adenosyl-L-methionine = 5-methyluridine(341) in tmRNA + S-adenosyl-L-homocysteine + H(+)</text>
        <dbReference type="Rhea" id="RHEA:43612"/>
        <dbReference type="Rhea" id="RHEA-COMP:10630"/>
        <dbReference type="Rhea" id="RHEA-COMP:10631"/>
        <dbReference type="ChEBI" id="CHEBI:15378"/>
        <dbReference type="ChEBI" id="CHEBI:57856"/>
        <dbReference type="ChEBI" id="CHEBI:59789"/>
        <dbReference type="ChEBI" id="CHEBI:65315"/>
        <dbReference type="ChEBI" id="CHEBI:74447"/>
    </reaction>
</comment>
<comment type="similarity">
    <text evidence="2">Belongs to the class I-like SAM-binding methyltransferase superfamily. RNA M5U methyltransferase family. TrmA subfamily.</text>
</comment>
<feature type="chain" id="PRO_0000161866" description="tRNA/tmRNA (uracil-C(5))-methyltransferase">
    <location>
        <begin position="1" status="less than"/>
        <end position="225" status="greater than"/>
    </location>
</feature>
<feature type="binding site" evidence="2">
    <location>
        <position position="114"/>
    </location>
    <ligand>
        <name>S-adenosyl-L-methionine</name>
        <dbReference type="ChEBI" id="CHEBI:59789"/>
    </ligand>
</feature>
<feature type="binding site" evidence="2">
    <location>
        <position position="142"/>
    </location>
    <ligand>
        <name>S-adenosyl-L-methionine</name>
        <dbReference type="ChEBI" id="CHEBI:59789"/>
    </ligand>
</feature>
<feature type="binding site" evidence="2">
    <location>
        <position position="147"/>
    </location>
    <ligand>
        <name>S-adenosyl-L-methionine</name>
        <dbReference type="ChEBI" id="CHEBI:59789"/>
    </ligand>
</feature>
<feature type="binding site" evidence="2">
    <location>
        <position position="163"/>
    </location>
    <ligand>
        <name>S-adenosyl-L-methionine</name>
        <dbReference type="ChEBI" id="CHEBI:59789"/>
    </ligand>
</feature>
<feature type="binding site" evidence="2">
    <location>
        <position position="225"/>
    </location>
    <ligand>
        <name>S-adenosyl-L-methionine</name>
        <dbReference type="ChEBI" id="CHEBI:59789"/>
    </ligand>
</feature>
<feature type="non-terminal residue">
    <location>
        <position position="1"/>
    </location>
</feature>
<feature type="non-terminal residue">
    <location>
        <position position="225"/>
    </location>
</feature>
<dbReference type="EC" id="2.1.1.-"/>
<dbReference type="EC" id="2.1.1.35"/>
<dbReference type="EMBL" id="M90807">
    <property type="protein sequence ID" value="AAA63404.1"/>
    <property type="molecule type" value="Genomic_DNA"/>
</dbReference>
<dbReference type="SMR" id="P55134"/>
<dbReference type="GO" id="GO:0005829">
    <property type="term" value="C:cytosol"/>
    <property type="evidence" value="ECO:0007669"/>
    <property type="project" value="TreeGrafter"/>
</dbReference>
<dbReference type="GO" id="GO:0019843">
    <property type="term" value="F:rRNA binding"/>
    <property type="evidence" value="ECO:0007669"/>
    <property type="project" value="TreeGrafter"/>
</dbReference>
<dbReference type="GO" id="GO:0030697">
    <property type="term" value="F:tRNA (uracil(54)-C5)-methyltransferase activity, S-adenosyl methionine-dependent"/>
    <property type="evidence" value="ECO:0007669"/>
    <property type="project" value="UniProtKB-EC"/>
</dbReference>
<dbReference type="GO" id="GO:0000049">
    <property type="term" value="F:tRNA binding"/>
    <property type="evidence" value="ECO:0007669"/>
    <property type="project" value="TreeGrafter"/>
</dbReference>
<dbReference type="GO" id="GO:0032259">
    <property type="term" value="P:methylation"/>
    <property type="evidence" value="ECO:0007669"/>
    <property type="project" value="UniProtKB-KW"/>
</dbReference>
<dbReference type="GO" id="GO:0008033">
    <property type="term" value="P:tRNA processing"/>
    <property type="evidence" value="ECO:0007669"/>
    <property type="project" value="UniProtKB-KW"/>
</dbReference>
<dbReference type="CDD" id="cd02440">
    <property type="entry name" value="AdoMet_MTases"/>
    <property type="match status" value="1"/>
</dbReference>
<dbReference type="FunFam" id="2.40.50.1070:FF:000001">
    <property type="entry name" value="tRNA/tmRNA (uracil-C(5))-methyltransferase"/>
    <property type="match status" value="1"/>
</dbReference>
<dbReference type="Gene3D" id="2.40.50.1070">
    <property type="match status" value="1"/>
</dbReference>
<dbReference type="Gene3D" id="3.40.50.150">
    <property type="entry name" value="Vaccinia Virus protein VP39"/>
    <property type="match status" value="1"/>
</dbReference>
<dbReference type="InterPro" id="IPR029063">
    <property type="entry name" value="SAM-dependent_MTases_sf"/>
</dbReference>
<dbReference type="InterPro" id="IPR011869">
    <property type="entry name" value="TrmA_MeTrfase"/>
</dbReference>
<dbReference type="InterPro" id="IPR010280">
    <property type="entry name" value="U5_MeTrfase_fam"/>
</dbReference>
<dbReference type="NCBIfam" id="TIGR02143">
    <property type="entry name" value="trmA_only"/>
    <property type="match status" value="1"/>
</dbReference>
<dbReference type="PANTHER" id="PTHR47790">
    <property type="entry name" value="TRNA/TMRNA (URACIL-C(5))-METHYLTRANSFERASE"/>
    <property type="match status" value="1"/>
</dbReference>
<dbReference type="PANTHER" id="PTHR47790:SF2">
    <property type="entry name" value="TRNA_TMRNA (URACIL-C(5))-METHYLTRANSFERASE"/>
    <property type="match status" value="1"/>
</dbReference>
<dbReference type="Pfam" id="PF05958">
    <property type="entry name" value="tRNA_U5-meth_tr"/>
    <property type="match status" value="1"/>
</dbReference>
<dbReference type="SUPFAM" id="SSF53335">
    <property type="entry name" value="S-adenosyl-L-methionine-dependent methyltransferases"/>
    <property type="match status" value="1"/>
</dbReference>
<dbReference type="PROSITE" id="PS51687">
    <property type="entry name" value="SAM_MT_RNA_M5U"/>
    <property type="match status" value="1"/>
</dbReference>
<protein>
    <recommendedName>
        <fullName>tRNA/tmRNA (uracil-C(5))-methyltransferase</fullName>
        <ecNumber>2.1.1.-</ecNumber>
        <ecNumber>2.1.1.35</ecNumber>
    </recommendedName>
    <alternativeName>
        <fullName>tRNA (uracil(54)-C(5))-methyltransferase</fullName>
    </alternativeName>
    <alternativeName>
        <fullName>tRNA(m5U54)-methyltransferase</fullName>
        <shortName>RUMT</shortName>
    </alternativeName>
    <alternativeName>
        <fullName>tmRNA (uracil(341)-C(5))-methyltransferase</fullName>
    </alternativeName>
</protein>
<organism>
    <name type="scientific">Neisseria gonorrhoeae</name>
    <dbReference type="NCBI Taxonomy" id="485"/>
    <lineage>
        <taxon>Bacteria</taxon>
        <taxon>Pseudomonadati</taxon>
        <taxon>Pseudomonadota</taxon>
        <taxon>Betaproteobacteria</taxon>
        <taxon>Neisseriales</taxon>
        <taxon>Neisseriaceae</taxon>
        <taxon>Neisseria</taxon>
    </lineage>
</organism>
<proteinExistence type="inferred from homology"/>
<gene>
    <name type="primary">trmA</name>
</gene>
<keyword id="KW-0489">Methyltransferase</keyword>
<keyword id="KW-0949">S-adenosyl-L-methionine</keyword>
<keyword id="KW-0808">Transferase</keyword>
<keyword id="KW-0819">tRNA processing</keyword>